<reference key="1">
    <citation type="submission" date="2006-10" db="EMBL/GenBank/DDBJ databases">
        <title>Complete sequence of chromosome of Pelobacter propionicus DSM 2379.</title>
        <authorList>
            <consortium name="US DOE Joint Genome Institute"/>
            <person name="Copeland A."/>
            <person name="Lucas S."/>
            <person name="Lapidus A."/>
            <person name="Barry K."/>
            <person name="Detter J.C."/>
            <person name="Glavina del Rio T."/>
            <person name="Hammon N."/>
            <person name="Israni S."/>
            <person name="Dalin E."/>
            <person name="Tice H."/>
            <person name="Pitluck S."/>
            <person name="Saunders E."/>
            <person name="Brettin T."/>
            <person name="Bruce D."/>
            <person name="Han C."/>
            <person name="Tapia R."/>
            <person name="Schmutz J."/>
            <person name="Larimer F."/>
            <person name="Land M."/>
            <person name="Hauser L."/>
            <person name="Kyrpides N."/>
            <person name="Kim E."/>
            <person name="Lovley D."/>
            <person name="Richardson P."/>
        </authorList>
    </citation>
    <scope>NUCLEOTIDE SEQUENCE [LARGE SCALE GENOMIC DNA]</scope>
    <source>
        <strain>DSM 2379 / NBRC 103807 / OttBd1</strain>
    </source>
</reference>
<comment type="function">
    <text evidence="1">Redox regulated molecular chaperone. Protects both thermally unfolding and oxidatively damaged proteins from irreversible aggregation. Plays an important role in the bacterial defense system toward oxidative stress.</text>
</comment>
<comment type="subcellular location">
    <subcellularLocation>
        <location evidence="1">Cytoplasm</location>
    </subcellularLocation>
</comment>
<comment type="PTM">
    <text evidence="1">Under oxidizing conditions two disulfide bonds are formed involving the reactive cysteines. Under reducing conditions zinc is bound to the reactive cysteines and the protein is inactive.</text>
</comment>
<comment type="similarity">
    <text evidence="1">Belongs to the HSP33 family.</text>
</comment>
<feature type="chain" id="PRO_1000015553" description="33 kDa chaperonin">
    <location>
        <begin position="1"/>
        <end position="304"/>
    </location>
</feature>
<feature type="disulfide bond" description="Redox-active" evidence="1">
    <location>
        <begin position="236"/>
        <end position="238"/>
    </location>
</feature>
<feature type="disulfide bond" description="Redox-active" evidence="1">
    <location>
        <begin position="269"/>
        <end position="272"/>
    </location>
</feature>
<dbReference type="EMBL" id="CP000482">
    <property type="protein sequence ID" value="ABL00976.1"/>
    <property type="molecule type" value="Genomic_DNA"/>
</dbReference>
<dbReference type="RefSeq" id="WP_011737192.1">
    <property type="nucleotide sequence ID" value="NC_008609.1"/>
</dbReference>
<dbReference type="SMR" id="A1AUF5"/>
<dbReference type="STRING" id="338966.Ppro_3383"/>
<dbReference type="KEGG" id="ppd:Ppro_3383"/>
<dbReference type="eggNOG" id="COG1281">
    <property type="taxonomic scope" value="Bacteria"/>
</dbReference>
<dbReference type="HOGENOM" id="CLU_054493_1_0_7"/>
<dbReference type="OrthoDB" id="9793753at2"/>
<dbReference type="Proteomes" id="UP000006732">
    <property type="component" value="Chromosome"/>
</dbReference>
<dbReference type="GO" id="GO:0005737">
    <property type="term" value="C:cytoplasm"/>
    <property type="evidence" value="ECO:0007669"/>
    <property type="project" value="UniProtKB-SubCell"/>
</dbReference>
<dbReference type="GO" id="GO:0044183">
    <property type="term" value="F:protein folding chaperone"/>
    <property type="evidence" value="ECO:0007669"/>
    <property type="project" value="TreeGrafter"/>
</dbReference>
<dbReference type="GO" id="GO:0051082">
    <property type="term" value="F:unfolded protein binding"/>
    <property type="evidence" value="ECO:0007669"/>
    <property type="project" value="UniProtKB-UniRule"/>
</dbReference>
<dbReference type="GO" id="GO:0042026">
    <property type="term" value="P:protein refolding"/>
    <property type="evidence" value="ECO:0007669"/>
    <property type="project" value="TreeGrafter"/>
</dbReference>
<dbReference type="CDD" id="cd00498">
    <property type="entry name" value="Hsp33"/>
    <property type="match status" value="1"/>
</dbReference>
<dbReference type="Gene3D" id="3.55.30.10">
    <property type="entry name" value="Hsp33 domain"/>
    <property type="match status" value="1"/>
</dbReference>
<dbReference type="Gene3D" id="3.90.1280.10">
    <property type="entry name" value="HSP33 redox switch-like"/>
    <property type="match status" value="1"/>
</dbReference>
<dbReference type="HAMAP" id="MF_00117">
    <property type="entry name" value="HslO"/>
    <property type="match status" value="1"/>
</dbReference>
<dbReference type="InterPro" id="IPR000397">
    <property type="entry name" value="Heat_shock_Hsp33"/>
</dbReference>
<dbReference type="InterPro" id="IPR016154">
    <property type="entry name" value="Heat_shock_Hsp33_C"/>
</dbReference>
<dbReference type="InterPro" id="IPR016153">
    <property type="entry name" value="Heat_shock_Hsp33_N"/>
</dbReference>
<dbReference type="NCBIfam" id="NF001033">
    <property type="entry name" value="PRK00114.1"/>
    <property type="match status" value="1"/>
</dbReference>
<dbReference type="PANTHER" id="PTHR30111">
    <property type="entry name" value="33 KDA CHAPERONIN"/>
    <property type="match status" value="1"/>
</dbReference>
<dbReference type="PANTHER" id="PTHR30111:SF1">
    <property type="entry name" value="33 KDA CHAPERONIN"/>
    <property type="match status" value="1"/>
</dbReference>
<dbReference type="Pfam" id="PF01430">
    <property type="entry name" value="HSP33"/>
    <property type="match status" value="1"/>
</dbReference>
<dbReference type="PIRSF" id="PIRSF005261">
    <property type="entry name" value="Heat_shock_Hsp33"/>
    <property type="match status" value="1"/>
</dbReference>
<dbReference type="SUPFAM" id="SSF64397">
    <property type="entry name" value="Hsp33 domain"/>
    <property type="match status" value="1"/>
</dbReference>
<dbReference type="SUPFAM" id="SSF118352">
    <property type="entry name" value="HSP33 redox switch-like"/>
    <property type="match status" value="1"/>
</dbReference>
<name>HSLO_PELPD</name>
<evidence type="ECO:0000255" key="1">
    <source>
        <dbReference type="HAMAP-Rule" id="MF_00117"/>
    </source>
</evidence>
<protein>
    <recommendedName>
        <fullName evidence="1">33 kDa chaperonin</fullName>
    </recommendedName>
    <alternativeName>
        <fullName evidence="1">Heat shock protein 33 homolog</fullName>
        <shortName evidence="1">HSP33</shortName>
    </alternativeName>
</protein>
<accession>A1AUF5</accession>
<gene>
    <name evidence="1" type="primary">hslO</name>
    <name type="ordered locus">Ppro_3383</name>
</gene>
<keyword id="KW-0143">Chaperone</keyword>
<keyword id="KW-0963">Cytoplasm</keyword>
<keyword id="KW-1015">Disulfide bond</keyword>
<keyword id="KW-0676">Redox-active center</keyword>
<keyword id="KW-1185">Reference proteome</keyword>
<keyword id="KW-0862">Zinc</keyword>
<organism>
    <name type="scientific">Pelobacter propionicus (strain DSM 2379 / NBRC 103807 / OttBd1)</name>
    <dbReference type="NCBI Taxonomy" id="338966"/>
    <lineage>
        <taxon>Bacteria</taxon>
        <taxon>Pseudomonadati</taxon>
        <taxon>Thermodesulfobacteriota</taxon>
        <taxon>Desulfuromonadia</taxon>
        <taxon>Desulfuromonadales</taxon>
        <taxon>Desulfuromonadaceae</taxon>
        <taxon>Pelobacter</taxon>
    </lineage>
</organism>
<sequence>MGDHIIRSLSVSGGIRILVCDVALLTREICRLHGASPTVSIALGRGLAGGALMGALLKPGQRLALKFEANGPLRKMIVEADSDGAVRASVANPTAEAEPLEGRWNVAGVLGRAGFLTVSKDLGLGGQPYQGTVQLCSSEIGDDLAYYLADSEQTPSAVGLGAALDEDGLISVCGGFLVQALPGVDEAERDRVTDNIASLPPLSSLLREGGTQKLLELLFDSVAYTRLETRELFFRCGCGREKVERALLSLGGAELWDMGTREGEARVTCEFCRQSYQFDADELKALAETATLTRIHEEHEHLQQ</sequence>
<proteinExistence type="inferred from homology"/>